<gene>
    <name evidence="1" type="primary">rlmH</name>
    <name type="ordered locus">BT_1562</name>
</gene>
<evidence type="ECO:0000255" key="1">
    <source>
        <dbReference type="HAMAP-Rule" id="MF_00658"/>
    </source>
</evidence>
<organism>
    <name type="scientific">Bacteroides thetaiotaomicron (strain ATCC 29148 / DSM 2079 / JCM 5827 / CCUG 10774 / NCTC 10582 / VPI-5482 / E50)</name>
    <dbReference type="NCBI Taxonomy" id="226186"/>
    <lineage>
        <taxon>Bacteria</taxon>
        <taxon>Pseudomonadati</taxon>
        <taxon>Bacteroidota</taxon>
        <taxon>Bacteroidia</taxon>
        <taxon>Bacteroidales</taxon>
        <taxon>Bacteroidaceae</taxon>
        <taxon>Bacteroides</taxon>
    </lineage>
</organism>
<sequence>MKTTLLVVGRTVEQHYITAINDYIQRTKRFITFDMEVIPELKNTKSLSMDQQKEKEGELILKALQPGDVIVLLDEHGKEMRSLEFADYMKRKMNTVNKRLVFVIGGPYGFSEKVYQVANEKISMSKMTFSHQMIRLIFVEQIYRAMTILNGGPYHHE</sequence>
<accession>Q8A7G2</accession>
<proteinExistence type="inferred from homology"/>
<feature type="chain" id="PRO_0000198091" description="Ribosomal RNA large subunit methyltransferase H">
    <location>
        <begin position="1"/>
        <end position="157"/>
    </location>
</feature>
<feature type="binding site" evidence="1">
    <location>
        <position position="73"/>
    </location>
    <ligand>
        <name>S-adenosyl-L-methionine</name>
        <dbReference type="ChEBI" id="CHEBI:59789"/>
    </ligand>
</feature>
<feature type="binding site" evidence="1">
    <location>
        <position position="105"/>
    </location>
    <ligand>
        <name>S-adenosyl-L-methionine</name>
        <dbReference type="ChEBI" id="CHEBI:59789"/>
    </ligand>
</feature>
<feature type="binding site" evidence="1">
    <location>
        <begin position="124"/>
        <end position="129"/>
    </location>
    <ligand>
        <name>S-adenosyl-L-methionine</name>
        <dbReference type="ChEBI" id="CHEBI:59789"/>
    </ligand>
</feature>
<protein>
    <recommendedName>
        <fullName evidence="1">Ribosomal RNA large subunit methyltransferase H</fullName>
        <ecNumber evidence="1">2.1.1.177</ecNumber>
    </recommendedName>
    <alternativeName>
        <fullName evidence="1">23S rRNA (pseudouridine1915-N3)-methyltransferase</fullName>
    </alternativeName>
    <alternativeName>
        <fullName evidence="1">23S rRNA m3Psi1915 methyltransferase</fullName>
    </alternativeName>
    <alternativeName>
        <fullName evidence="1">rRNA (pseudouridine-N3-)-methyltransferase RlmH</fullName>
    </alternativeName>
</protein>
<keyword id="KW-0963">Cytoplasm</keyword>
<keyword id="KW-0489">Methyltransferase</keyword>
<keyword id="KW-1185">Reference proteome</keyword>
<keyword id="KW-0698">rRNA processing</keyword>
<keyword id="KW-0949">S-adenosyl-L-methionine</keyword>
<keyword id="KW-0808">Transferase</keyword>
<name>RLMH_BACTN</name>
<dbReference type="EC" id="2.1.1.177" evidence="1"/>
<dbReference type="EMBL" id="AE015928">
    <property type="protein sequence ID" value="AAO76669.1"/>
    <property type="molecule type" value="Genomic_DNA"/>
</dbReference>
<dbReference type="RefSeq" id="NP_810475.1">
    <property type="nucleotide sequence ID" value="NC_004663.1"/>
</dbReference>
<dbReference type="RefSeq" id="WP_011107863.1">
    <property type="nucleotide sequence ID" value="NC_004663.1"/>
</dbReference>
<dbReference type="SMR" id="Q8A7G2"/>
<dbReference type="FunCoup" id="Q8A7G2">
    <property type="interactions" value="327"/>
</dbReference>
<dbReference type="STRING" id="226186.BT_1562"/>
<dbReference type="PaxDb" id="226186-BT_1562"/>
<dbReference type="EnsemblBacteria" id="AAO76669">
    <property type="protein sequence ID" value="AAO76669"/>
    <property type="gene ID" value="BT_1562"/>
</dbReference>
<dbReference type="GeneID" id="60927544"/>
<dbReference type="KEGG" id="bth:BT_1562"/>
<dbReference type="PATRIC" id="fig|226186.12.peg.1597"/>
<dbReference type="eggNOG" id="COG1576">
    <property type="taxonomic scope" value="Bacteria"/>
</dbReference>
<dbReference type="HOGENOM" id="CLU_100552_2_0_10"/>
<dbReference type="InParanoid" id="Q8A7G2"/>
<dbReference type="OrthoDB" id="9806643at2"/>
<dbReference type="Proteomes" id="UP000001414">
    <property type="component" value="Chromosome"/>
</dbReference>
<dbReference type="GO" id="GO:0005737">
    <property type="term" value="C:cytoplasm"/>
    <property type="evidence" value="ECO:0007669"/>
    <property type="project" value="UniProtKB-SubCell"/>
</dbReference>
<dbReference type="GO" id="GO:0070038">
    <property type="term" value="F:rRNA (pseudouridine-N3-)-methyltransferase activity"/>
    <property type="evidence" value="ECO:0007669"/>
    <property type="project" value="UniProtKB-UniRule"/>
</dbReference>
<dbReference type="CDD" id="cd18081">
    <property type="entry name" value="RlmH-like"/>
    <property type="match status" value="1"/>
</dbReference>
<dbReference type="Gene3D" id="3.40.1280.10">
    <property type="match status" value="1"/>
</dbReference>
<dbReference type="HAMAP" id="MF_00658">
    <property type="entry name" value="23SrRNA_methyltr_H"/>
    <property type="match status" value="1"/>
</dbReference>
<dbReference type="InterPro" id="IPR029028">
    <property type="entry name" value="Alpha/beta_knot_MTases"/>
</dbReference>
<dbReference type="InterPro" id="IPR003742">
    <property type="entry name" value="RlmH-like"/>
</dbReference>
<dbReference type="InterPro" id="IPR029026">
    <property type="entry name" value="tRNA_m1G_MTases_N"/>
</dbReference>
<dbReference type="NCBIfam" id="NF000990">
    <property type="entry name" value="PRK00103.2-4"/>
    <property type="match status" value="1"/>
</dbReference>
<dbReference type="PANTHER" id="PTHR33603">
    <property type="entry name" value="METHYLTRANSFERASE"/>
    <property type="match status" value="1"/>
</dbReference>
<dbReference type="PANTHER" id="PTHR33603:SF1">
    <property type="entry name" value="RIBOSOMAL RNA LARGE SUBUNIT METHYLTRANSFERASE H"/>
    <property type="match status" value="1"/>
</dbReference>
<dbReference type="Pfam" id="PF02590">
    <property type="entry name" value="SPOUT_MTase"/>
    <property type="match status" value="1"/>
</dbReference>
<dbReference type="PIRSF" id="PIRSF004505">
    <property type="entry name" value="MT_bac"/>
    <property type="match status" value="1"/>
</dbReference>
<dbReference type="SUPFAM" id="SSF75217">
    <property type="entry name" value="alpha/beta knot"/>
    <property type="match status" value="1"/>
</dbReference>
<comment type="function">
    <text evidence="1">Specifically methylates the pseudouridine at position 1915 (m3Psi1915) in 23S rRNA.</text>
</comment>
<comment type="catalytic activity">
    <reaction evidence="1">
        <text>pseudouridine(1915) in 23S rRNA + S-adenosyl-L-methionine = N(3)-methylpseudouridine(1915) in 23S rRNA + S-adenosyl-L-homocysteine + H(+)</text>
        <dbReference type="Rhea" id="RHEA:42752"/>
        <dbReference type="Rhea" id="RHEA-COMP:10221"/>
        <dbReference type="Rhea" id="RHEA-COMP:10222"/>
        <dbReference type="ChEBI" id="CHEBI:15378"/>
        <dbReference type="ChEBI" id="CHEBI:57856"/>
        <dbReference type="ChEBI" id="CHEBI:59789"/>
        <dbReference type="ChEBI" id="CHEBI:65314"/>
        <dbReference type="ChEBI" id="CHEBI:74486"/>
        <dbReference type="EC" id="2.1.1.177"/>
    </reaction>
</comment>
<comment type="subunit">
    <text evidence="1">Homodimer.</text>
</comment>
<comment type="subcellular location">
    <subcellularLocation>
        <location evidence="1">Cytoplasm</location>
    </subcellularLocation>
</comment>
<comment type="similarity">
    <text evidence="1">Belongs to the RNA methyltransferase RlmH family.</text>
</comment>
<reference key="1">
    <citation type="journal article" date="2003" name="Science">
        <title>A genomic view of the human-Bacteroides thetaiotaomicron symbiosis.</title>
        <authorList>
            <person name="Xu J."/>
            <person name="Bjursell M.K."/>
            <person name="Himrod J."/>
            <person name="Deng S."/>
            <person name="Carmichael L.K."/>
            <person name="Chiang H.C."/>
            <person name="Hooper L.V."/>
            <person name="Gordon J.I."/>
        </authorList>
    </citation>
    <scope>NUCLEOTIDE SEQUENCE [LARGE SCALE GENOMIC DNA]</scope>
    <source>
        <strain>ATCC 29148 / DSM 2079 / JCM 5827 / CCUG 10774 / NCTC 10582 / VPI-5482 / E50</strain>
    </source>
</reference>